<keyword id="KW-1003">Cell membrane</keyword>
<keyword id="KW-0963">Cytoplasm</keyword>
<keyword id="KW-0325">Glycoprotein</keyword>
<keyword id="KW-0333">Golgi apparatus</keyword>
<keyword id="KW-0472">Membrane</keyword>
<keyword id="KW-0539">Nucleus</keyword>
<keyword id="KW-1185">Reference proteome</keyword>
<keyword id="KW-0812">Transmembrane</keyword>
<keyword id="KW-1133">Transmembrane helix</keyword>
<comment type="function">
    <text evidence="1 2 3">Functions as a key regulator of cell membrane composition by regulating protein surface expression. Also, plays a role in regulation of processes including cell migration, cell proliferation, cell contraction and cell adhesion. Regulates transepithelial migration of neutrophils into the alveolar lumen, potentially via mediation of cell surface expression of adhesion markers and lipid raft formation (By similarity). Negatively regulates caveolae formation by reducing CAV1 expression and CAV1 amount by increasing lysosomal degradation (By similarity). Facilitates surface trafficking and the formation of lipid rafts bearing GPI-anchor proteins (By similarity). Regulates surface expression of MHC1 and ICAM1 proteins increasing susceptibility to T-cell mediated cytotoxicity (By similarity). Regulates the plasma membrane expression of the integrin heterodimers ITGA6-ITGB1, ITGA5-ITGB3 and ITGA5-ITGB1 resulting in modulation of cell-matrix adhesion (By similarity). Also regulates many processes through PTK2 (By similarity). Regulates blood vessel endothelial cell migration and angiogenesis by regulating VEGF protein expression through PTK2 activation (By similarity). Regulates cell migration and cell contraction through PTK2 and SRC activation (By similarity). Regulates focal adhesion density, F-actin conformation and cell adhesion capacity through interaction with PTK2. Positively regulates cell proliferation (By similarity). Plays a role during cell death and cell blebbing (By similarity). Promotes angiogenesis and vasculogenesis through induction of VEGFA via a HIF1A-dependent pathway (By similarity). Also plays a role in embryo implantation by regulating surface trafficking of integrin heterodimer ITGA5-ITGB3 (By similarity). Plays a role in placental angiogenesis and uterine natural killer cell regulation at the maternal-fetal placental interface, however not required in the maternal tissues for a viable pregnancy (By similarity). Involved in the early stages of embryogenic development and cardiogenesis, potentially via regulation of epithelial-mesenchymal transition timing (By similarity). May play a role in glomerular filtration (By similarity).</text>
</comment>
<comment type="subunit">
    <text evidence="2 3">Interacts with PTK2; regulates PTK2 activation and localization (By similarity). Interacts with ITGB3; regulates the levels of the heterodimer ITGA5-ITGB3 integrin surface expression (By similarity). Interacts with P2RX7 (via C-terminus) (By similarity). Interacts with ITGB1; the interaction may be direct or indirect and ITGB1 has a heterodimer form (By similarity).</text>
</comment>
<comment type="subcellular location">
    <subcellularLocation>
        <location evidence="2">Golgi apparatus membrane</location>
        <topology evidence="5">Multi-pass membrane protein</topology>
    </subcellularLocation>
    <subcellularLocation>
        <location evidence="2 3">Cell membrane</location>
    </subcellularLocation>
    <subcellularLocation>
        <location evidence="2">Apical cell membrane</location>
    </subcellularLocation>
    <subcellularLocation>
        <location evidence="2 3">Membrane raft</location>
    </subcellularLocation>
    <subcellularLocation>
        <location evidence="2 3 4">Cytoplasm</location>
    </subcellularLocation>
    <subcellularLocation>
        <location evidence="4">Nucleus</location>
    </subcellularLocation>
    <subcellularLocation>
        <location evidence="2">Cytoplasm</location>
        <location evidence="2">Perinuclear region</location>
    </subcellularLocation>
    <text evidence="2 4">Localizes in cytoplasm, foot processes and cell bodies of podocytes and nucleus of endothelial cells of kidney. Localizes to the apical cell surface in the luminal epithelium and glandular epithelium. Colocalized with ITGB1 and GPI-anchor proteins on plasma membrane.</text>
</comment>
<comment type="similarity">
    <text evidence="6">Belongs to the PMP-22/EMP/MP20 family.</text>
</comment>
<organism>
    <name type="scientific">Bos taurus</name>
    <name type="common">Bovine</name>
    <dbReference type="NCBI Taxonomy" id="9913"/>
    <lineage>
        <taxon>Eukaryota</taxon>
        <taxon>Metazoa</taxon>
        <taxon>Chordata</taxon>
        <taxon>Craniata</taxon>
        <taxon>Vertebrata</taxon>
        <taxon>Euteleostomi</taxon>
        <taxon>Mammalia</taxon>
        <taxon>Eutheria</taxon>
        <taxon>Laurasiatheria</taxon>
        <taxon>Artiodactyla</taxon>
        <taxon>Ruminantia</taxon>
        <taxon>Pecora</taxon>
        <taxon>Bovidae</taxon>
        <taxon>Bovinae</taxon>
        <taxon>Bos</taxon>
    </lineage>
</organism>
<name>EMP2_BOVIN</name>
<protein>
    <recommendedName>
        <fullName>Epithelial membrane protein 2</fullName>
        <shortName>EMP-2</shortName>
    </recommendedName>
</protein>
<gene>
    <name type="primary">EMP2</name>
</gene>
<feature type="chain" id="PRO_0000244413" description="Epithelial membrane protein 2">
    <location>
        <begin position="1"/>
        <end position="167"/>
    </location>
</feature>
<feature type="transmembrane region" description="Helical" evidence="5">
    <location>
        <begin position="1"/>
        <end position="21"/>
    </location>
</feature>
<feature type="transmembrane region" description="Helical" evidence="5">
    <location>
        <begin position="67"/>
        <end position="87"/>
    </location>
</feature>
<feature type="transmembrane region" description="Helical" evidence="5">
    <location>
        <begin position="95"/>
        <end position="115"/>
    </location>
</feature>
<feature type="transmembrane region" description="Helical" evidence="5">
    <location>
        <begin position="143"/>
        <end position="163"/>
    </location>
</feature>
<feature type="glycosylation site" description="N-linked (GlcNAc...) asparagine" evidence="5">
    <location>
        <position position="44"/>
    </location>
</feature>
<feature type="glycosylation site" description="N-linked (GlcNAc...) asparagine" evidence="5">
    <location>
        <position position="47"/>
    </location>
</feature>
<feature type="glycosylation site" description="N-linked (GlcNAc...) asparagine" evidence="5">
    <location>
        <position position="52"/>
    </location>
</feature>
<dbReference type="EMBL" id="BC111627">
    <property type="protein sequence ID" value="AAI11628.1"/>
    <property type="molecule type" value="mRNA"/>
</dbReference>
<dbReference type="RefSeq" id="NP_001068792.1">
    <property type="nucleotide sequence ID" value="NM_001075324.1"/>
</dbReference>
<dbReference type="SMR" id="Q2NKU9"/>
<dbReference type="FunCoup" id="Q2NKU9">
    <property type="interactions" value="277"/>
</dbReference>
<dbReference type="STRING" id="9913.ENSBTAP00000009444"/>
<dbReference type="GlyCosmos" id="Q2NKU9">
    <property type="glycosylation" value="3 sites, No reported glycans"/>
</dbReference>
<dbReference type="GlyGen" id="Q2NKU9">
    <property type="glycosylation" value="3 sites"/>
</dbReference>
<dbReference type="PaxDb" id="9913-ENSBTAP00000009444"/>
<dbReference type="GeneID" id="507667"/>
<dbReference type="KEGG" id="bta:507667"/>
<dbReference type="CTD" id="2013"/>
<dbReference type="eggNOG" id="ENOG502RYYE">
    <property type="taxonomic scope" value="Eukaryota"/>
</dbReference>
<dbReference type="InParanoid" id="Q2NKU9"/>
<dbReference type="OrthoDB" id="9939098at2759"/>
<dbReference type="Proteomes" id="UP000009136">
    <property type="component" value="Unplaced"/>
</dbReference>
<dbReference type="GO" id="GO:0045177">
    <property type="term" value="C:apical part of cell"/>
    <property type="evidence" value="ECO:0000250"/>
    <property type="project" value="UniProtKB"/>
</dbReference>
<dbReference type="GO" id="GO:0016324">
    <property type="term" value="C:apical plasma membrane"/>
    <property type="evidence" value="ECO:0000250"/>
    <property type="project" value="UniProtKB"/>
</dbReference>
<dbReference type="GO" id="GO:0009986">
    <property type="term" value="C:cell surface"/>
    <property type="evidence" value="ECO:0000250"/>
    <property type="project" value="UniProtKB"/>
</dbReference>
<dbReference type="GO" id="GO:0005737">
    <property type="term" value="C:cytoplasm"/>
    <property type="evidence" value="ECO:0000250"/>
    <property type="project" value="UniProtKB"/>
</dbReference>
<dbReference type="GO" id="GO:0005794">
    <property type="term" value="C:Golgi apparatus"/>
    <property type="evidence" value="ECO:0000250"/>
    <property type="project" value="UniProtKB"/>
</dbReference>
<dbReference type="GO" id="GO:0000139">
    <property type="term" value="C:Golgi membrane"/>
    <property type="evidence" value="ECO:0007669"/>
    <property type="project" value="UniProtKB-SubCell"/>
</dbReference>
<dbReference type="GO" id="GO:0045121">
    <property type="term" value="C:membrane raft"/>
    <property type="evidence" value="ECO:0007669"/>
    <property type="project" value="UniProtKB-SubCell"/>
</dbReference>
<dbReference type="GO" id="GO:0005634">
    <property type="term" value="C:nucleus"/>
    <property type="evidence" value="ECO:0000250"/>
    <property type="project" value="UniProtKB"/>
</dbReference>
<dbReference type="GO" id="GO:0048471">
    <property type="term" value="C:perinuclear region of cytoplasm"/>
    <property type="evidence" value="ECO:0007669"/>
    <property type="project" value="UniProtKB-SubCell"/>
</dbReference>
<dbReference type="GO" id="GO:0005886">
    <property type="term" value="C:plasma membrane"/>
    <property type="evidence" value="ECO:0000250"/>
    <property type="project" value="UniProtKB"/>
</dbReference>
<dbReference type="GO" id="GO:0007015">
    <property type="term" value="P:actin filament organization"/>
    <property type="evidence" value="ECO:0000250"/>
    <property type="project" value="UniProtKB"/>
</dbReference>
<dbReference type="GO" id="GO:0070252">
    <property type="term" value="P:actin-mediated cell contraction"/>
    <property type="evidence" value="ECO:0000250"/>
    <property type="project" value="UniProtKB"/>
</dbReference>
<dbReference type="GO" id="GO:0006915">
    <property type="term" value="P:apoptotic process"/>
    <property type="evidence" value="ECO:0000250"/>
    <property type="project" value="UniProtKB"/>
</dbReference>
<dbReference type="GO" id="GO:0032060">
    <property type="term" value="P:bleb assembly"/>
    <property type="evidence" value="ECO:0000250"/>
    <property type="project" value="UniProtKB"/>
</dbReference>
<dbReference type="GO" id="GO:0043534">
    <property type="term" value="P:blood vessel endothelial cell migration"/>
    <property type="evidence" value="ECO:0000250"/>
    <property type="project" value="UniProtKB"/>
</dbReference>
<dbReference type="GO" id="GO:0007155">
    <property type="term" value="P:cell adhesion"/>
    <property type="evidence" value="ECO:0000250"/>
    <property type="project" value="UniProtKB"/>
</dbReference>
<dbReference type="GO" id="GO:0007160">
    <property type="term" value="P:cell-matrix adhesion"/>
    <property type="evidence" value="ECO:0000250"/>
    <property type="project" value="UniProtKB"/>
</dbReference>
<dbReference type="GO" id="GO:0045022">
    <property type="term" value="P:early endosome to late endosome transport"/>
    <property type="evidence" value="ECO:0000250"/>
    <property type="project" value="UniProtKB"/>
</dbReference>
<dbReference type="GO" id="GO:0007566">
    <property type="term" value="P:embryo implantation"/>
    <property type="evidence" value="ECO:0000250"/>
    <property type="project" value="UniProtKB"/>
</dbReference>
<dbReference type="GO" id="GO:0060136">
    <property type="term" value="P:embryonic process involved in female pregnancy"/>
    <property type="evidence" value="ECO:0000250"/>
    <property type="project" value="UniProtKB"/>
</dbReference>
<dbReference type="GO" id="GO:0060914">
    <property type="term" value="P:heart formation"/>
    <property type="evidence" value="ECO:0000250"/>
    <property type="project" value="UniProtKB"/>
</dbReference>
<dbReference type="GO" id="GO:0001765">
    <property type="term" value="P:membrane raft assembly"/>
    <property type="evidence" value="ECO:0000250"/>
    <property type="project" value="UniProtKB"/>
</dbReference>
<dbReference type="GO" id="GO:0001787">
    <property type="term" value="P:natural killer cell proliferation"/>
    <property type="evidence" value="ECO:0000250"/>
    <property type="project" value="UniProtKB"/>
</dbReference>
<dbReference type="GO" id="GO:1990266">
    <property type="term" value="P:neutrophil migration"/>
    <property type="evidence" value="ECO:0000250"/>
    <property type="project" value="UniProtKB"/>
</dbReference>
<dbReference type="GO" id="GO:0044854">
    <property type="term" value="P:plasma membrane raft assembly"/>
    <property type="evidence" value="ECO:0000250"/>
    <property type="project" value="UniProtKB"/>
</dbReference>
<dbReference type="GO" id="GO:0045766">
    <property type="term" value="P:positive regulation of angiogenesis"/>
    <property type="evidence" value="ECO:0000250"/>
    <property type="project" value="UniProtKB"/>
</dbReference>
<dbReference type="GO" id="GO:0062043">
    <property type="term" value="P:positive regulation of cardiac epithelial to mesenchymal transition"/>
    <property type="evidence" value="ECO:0000250"/>
    <property type="project" value="UniProtKB"/>
</dbReference>
<dbReference type="GO" id="GO:0008284">
    <property type="term" value="P:positive regulation of cell population proliferation"/>
    <property type="evidence" value="ECO:0000250"/>
    <property type="project" value="UniProtKB"/>
</dbReference>
<dbReference type="GO" id="GO:2001046">
    <property type="term" value="P:positive regulation of integrin-mediated signaling pathway"/>
    <property type="evidence" value="ECO:0000318"/>
    <property type="project" value="GO_Central"/>
</dbReference>
<dbReference type="GO" id="GO:0034394">
    <property type="term" value="P:protein localization to cell surface"/>
    <property type="evidence" value="ECO:0000250"/>
    <property type="project" value="UniProtKB"/>
</dbReference>
<dbReference type="GO" id="GO:0072659">
    <property type="term" value="P:protein localization to plasma membrane"/>
    <property type="evidence" value="ECO:0000250"/>
    <property type="project" value="UniProtKB"/>
</dbReference>
<dbReference type="GO" id="GO:0045765">
    <property type="term" value="P:regulation of angiogenesis"/>
    <property type="evidence" value="ECO:0000250"/>
    <property type="project" value="UniProtKB"/>
</dbReference>
<dbReference type="GO" id="GO:0001952">
    <property type="term" value="P:regulation of cell-matrix adhesion"/>
    <property type="evidence" value="ECO:0000318"/>
    <property type="project" value="GO_Central"/>
</dbReference>
<dbReference type="GO" id="GO:0010594">
    <property type="term" value="P:regulation of endothelial cell migration"/>
    <property type="evidence" value="ECO:0000250"/>
    <property type="project" value="UniProtKB"/>
</dbReference>
<dbReference type="GO" id="GO:0003093">
    <property type="term" value="P:regulation of glomerular filtration"/>
    <property type="evidence" value="ECO:0000250"/>
    <property type="project" value="UniProtKB"/>
</dbReference>
<dbReference type="GO" id="GO:0043549">
    <property type="term" value="P:regulation of kinase activity"/>
    <property type="evidence" value="ECO:0000250"/>
    <property type="project" value="UniProtKB"/>
</dbReference>
<dbReference type="GO" id="GO:2001212">
    <property type="term" value="P:regulation of vasculogenesis"/>
    <property type="evidence" value="ECO:0000250"/>
    <property type="project" value="UniProtKB"/>
</dbReference>
<dbReference type="GO" id="GO:0001913">
    <property type="term" value="P:T cell mediated cytotoxicity"/>
    <property type="evidence" value="ECO:0000250"/>
    <property type="project" value="UniProtKB"/>
</dbReference>
<dbReference type="FunFam" id="1.20.140.150:FF:000023">
    <property type="entry name" value="Epithelial membrane protein 2"/>
    <property type="match status" value="1"/>
</dbReference>
<dbReference type="Gene3D" id="1.20.140.150">
    <property type="match status" value="1"/>
</dbReference>
<dbReference type="InterPro" id="IPR003933">
    <property type="entry name" value="EMP-2"/>
</dbReference>
<dbReference type="InterPro" id="IPR050579">
    <property type="entry name" value="PMP-22/EMP/MP20-like"/>
</dbReference>
<dbReference type="InterPro" id="IPR004031">
    <property type="entry name" value="PMP22/EMP/MP20/Claudin"/>
</dbReference>
<dbReference type="InterPro" id="IPR004032">
    <property type="entry name" value="PMP22_EMP_MP20"/>
</dbReference>
<dbReference type="PANTHER" id="PTHR10671:SF32">
    <property type="entry name" value="EPITHELIAL MEMBRANE PROTEIN 2"/>
    <property type="match status" value="1"/>
</dbReference>
<dbReference type="PANTHER" id="PTHR10671">
    <property type="entry name" value="EPITHELIAL MEMBRANE PROTEIN-RELATED"/>
    <property type="match status" value="1"/>
</dbReference>
<dbReference type="Pfam" id="PF00822">
    <property type="entry name" value="PMP22_Claudin"/>
    <property type="match status" value="1"/>
</dbReference>
<dbReference type="PRINTS" id="PR01453">
    <property type="entry name" value="EPMEMFAMILY"/>
</dbReference>
<dbReference type="PRINTS" id="PR01455">
    <property type="entry name" value="EPMEMPROT2"/>
</dbReference>
<dbReference type="PROSITE" id="PS01221">
    <property type="entry name" value="PMP22_1"/>
    <property type="match status" value="1"/>
</dbReference>
<dbReference type="PROSITE" id="PS01222">
    <property type="entry name" value="PMP22_2"/>
    <property type="match status" value="1"/>
</dbReference>
<reference key="1">
    <citation type="submission" date="2006-01" db="EMBL/GenBank/DDBJ databases">
        <authorList>
            <consortium name="NIH - Mammalian Gene Collection (MGC) project"/>
        </authorList>
    </citation>
    <scope>NUCLEOTIDE SEQUENCE [LARGE SCALE MRNA]</scope>
    <source>
        <strain>Hereford</strain>
        <tissue>Testis</tissue>
    </source>
</reference>
<evidence type="ECO:0000250" key="1">
    <source>
        <dbReference type="UniProtKB" id="F1QIK8"/>
    </source>
</evidence>
<evidence type="ECO:0000250" key="2">
    <source>
        <dbReference type="UniProtKB" id="O88662"/>
    </source>
</evidence>
<evidence type="ECO:0000250" key="3">
    <source>
        <dbReference type="UniProtKB" id="P54851"/>
    </source>
</evidence>
<evidence type="ECO:0000250" key="4">
    <source>
        <dbReference type="UniProtKB" id="Q66HH2"/>
    </source>
</evidence>
<evidence type="ECO:0000255" key="5"/>
<evidence type="ECO:0000305" key="6"/>
<proteinExistence type="evidence at transcript level"/>
<accession>Q2NKU9</accession>
<sequence length="167" mass="18972">MLVLLAFIIVFHITSAALLLVATIDNAWWVGEEFFADIWKVCVNNTNCTELNDSVQDFSTVQAVQATMILSTILCCIAFLIFLLQLFRLKQGERFVLTSIIQLMACLCVMIAASIYTDRRKDIHEKNEELYAQTSGGSFGYSFILAWVAFAFTFISGLMYLILRKRK</sequence>